<reference key="1">
    <citation type="journal article" date="2001" name="Cytogenet. Cell Genet.">
        <title>Localization, genomic organization, and alternative transcription of a novel human SAM-dependent methyltransferase gene on chromosome 2p22--&gt;p21.</title>
        <authorList>
            <person name="Zhang Y."/>
            <person name="Gorry M.C."/>
            <person name="Hart P.S."/>
            <person name="Pettenati M.J."/>
            <person name="Wang L."/>
            <person name="Marks J.J."/>
            <person name="Lu X."/>
            <person name="Hart T.C."/>
        </authorList>
    </citation>
    <scope>NUCLEOTIDE SEQUENCE [GENOMIC DNA]</scope>
    <scope>ALTERNATIVE SPLICING (ISOFORM 1)</scope>
    <scope>TISSUE SPECIFICITY</scope>
</reference>
<reference key="2">
    <citation type="journal article" date="2004" name="Nat. Genet.">
        <title>Complete sequencing and characterization of 21,243 full-length human cDNAs.</title>
        <authorList>
            <person name="Ota T."/>
            <person name="Suzuki Y."/>
            <person name="Nishikawa T."/>
            <person name="Otsuki T."/>
            <person name="Sugiyama T."/>
            <person name="Irie R."/>
            <person name="Wakamatsu A."/>
            <person name="Hayashi K."/>
            <person name="Sato H."/>
            <person name="Nagai K."/>
            <person name="Kimura K."/>
            <person name="Makita H."/>
            <person name="Sekine M."/>
            <person name="Obayashi M."/>
            <person name="Nishi T."/>
            <person name="Shibahara T."/>
            <person name="Tanaka T."/>
            <person name="Ishii S."/>
            <person name="Yamamoto J."/>
            <person name="Saito K."/>
            <person name="Kawai Y."/>
            <person name="Isono Y."/>
            <person name="Nakamura Y."/>
            <person name="Nagahari K."/>
            <person name="Murakami K."/>
            <person name="Yasuda T."/>
            <person name="Iwayanagi T."/>
            <person name="Wagatsuma M."/>
            <person name="Shiratori A."/>
            <person name="Sudo H."/>
            <person name="Hosoiri T."/>
            <person name="Kaku Y."/>
            <person name="Kodaira H."/>
            <person name="Kondo H."/>
            <person name="Sugawara M."/>
            <person name="Takahashi M."/>
            <person name="Kanda K."/>
            <person name="Yokoi T."/>
            <person name="Furuya T."/>
            <person name="Kikkawa E."/>
            <person name="Omura Y."/>
            <person name="Abe K."/>
            <person name="Kamihara K."/>
            <person name="Katsuta N."/>
            <person name="Sato K."/>
            <person name="Tanikawa M."/>
            <person name="Yamazaki M."/>
            <person name="Ninomiya K."/>
            <person name="Ishibashi T."/>
            <person name="Yamashita H."/>
            <person name="Murakawa K."/>
            <person name="Fujimori K."/>
            <person name="Tanai H."/>
            <person name="Kimata M."/>
            <person name="Watanabe M."/>
            <person name="Hiraoka S."/>
            <person name="Chiba Y."/>
            <person name="Ishida S."/>
            <person name="Ono Y."/>
            <person name="Takiguchi S."/>
            <person name="Watanabe S."/>
            <person name="Yosida M."/>
            <person name="Hotuta T."/>
            <person name="Kusano J."/>
            <person name="Kanehori K."/>
            <person name="Takahashi-Fujii A."/>
            <person name="Hara H."/>
            <person name="Tanase T.-O."/>
            <person name="Nomura Y."/>
            <person name="Togiya S."/>
            <person name="Komai F."/>
            <person name="Hara R."/>
            <person name="Takeuchi K."/>
            <person name="Arita M."/>
            <person name="Imose N."/>
            <person name="Musashino K."/>
            <person name="Yuuki H."/>
            <person name="Oshima A."/>
            <person name="Sasaki N."/>
            <person name="Aotsuka S."/>
            <person name="Yoshikawa Y."/>
            <person name="Matsunawa H."/>
            <person name="Ichihara T."/>
            <person name="Shiohata N."/>
            <person name="Sano S."/>
            <person name="Moriya S."/>
            <person name="Momiyama H."/>
            <person name="Satoh N."/>
            <person name="Takami S."/>
            <person name="Terashima Y."/>
            <person name="Suzuki O."/>
            <person name="Nakagawa S."/>
            <person name="Senoh A."/>
            <person name="Mizoguchi H."/>
            <person name="Goto Y."/>
            <person name="Shimizu F."/>
            <person name="Wakebe H."/>
            <person name="Hishigaki H."/>
            <person name="Watanabe T."/>
            <person name="Sugiyama A."/>
            <person name="Takemoto M."/>
            <person name="Kawakami B."/>
            <person name="Yamazaki M."/>
            <person name="Watanabe K."/>
            <person name="Kumagai A."/>
            <person name="Itakura S."/>
            <person name="Fukuzumi Y."/>
            <person name="Fujimori Y."/>
            <person name="Komiyama M."/>
            <person name="Tashiro H."/>
            <person name="Tanigami A."/>
            <person name="Fujiwara T."/>
            <person name="Ono T."/>
            <person name="Yamada K."/>
            <person name="Fujii Y."/>
            <person name="Ozaki K."/>
            <person name="Hirao M."/>
            <person name="Ohmori Y."/>
            <person name="Kawabata A."/>
            <person name="Hikiji T."/>
            <person name="Kobatake N."/>
            <person name="Inagaki H."/>
            <person name="Ikema Y."/>
            <person name="Okamoto S."/>
            <person name="Okitani R."/>
            <person name="Kawakami T."/>
            <person name="Noguchi S."/>
            <person name="Itoh T."/>
            <person name="Shigeta K."/>
            <person name="Senba T."/>
            <person name="Matsumura K."/>
            <person name="Nakajima Y."/>
            <person name="Mizuno T."/>
            <person name="Morinaga M."/>
            <person name="Sasaki M."/>
            <person name="Togashi T."/>
            <person name="Oyama M."/>
            <person name="Hata H."/>
            <person name="Watanabe M."/>
            <person name="Komatsu T."/>
            <person name="Mizushima-Sugano J."/>
            <person name="Satoh T."/>
            <person name="Shirai Y."/>
            <person name="Takahashi Y."/>
            <person name="Nakagawa K."/>
            <person name="Okumura K."/>
            <person name="Nagase T."/>
            <person name="Nomura N."/>
            <person name="Kikuchi H."/>
            <person name="Masuho Y."/>
            <person name="Yamashita R."/>
            <person name="Nakai K."/>
            <person name="Yada T."/>
            <person name="Nakamura Y."/>
            <person name="Ohara O."/>
            <person name="Isogai T."/>
            <person name="Sugano S."/>
        </authorList>
    </citation>
    <scope>NUCLEOTIDE SEQUENCE [LARGE SCALE MRNA] (ISOFORM 2)</scope>
    <source>
        <tissue>Small intestine</tissue>
        <tissue>Thymus</tissue>
    </source>
</reference>
<reference key="3">
    <citation type="journal article" date="2005" name="Nature">
        <title>Generation and annotation of the DNA sequences of human chromosomes 2 and 4.</title>
        <authorList>
            <person name="Hillier L.W."/>
            <person name="Graves T.A."/>
            <person name="Fulton R.S."/>
            <person name="Fulton L.A."/>
            <person name="Pepin K.H."/>
            <person name="Minx P."/>
            <person name="Wagner-McPherson C."/>
            <person name="Layman D."/>
            <person name="Wylie K."/>
            <person name="Sekhon M."/>
            <person name="Becker M.C."/>
            <person name="Fewell G.A."/>
            <person name="Delehaunty K.D."/>
            <person name="Miner T.L."/>
            <person name="Nash W.E."/>
            <person name="Kremitzki C."/>
            <person name="Oddy L."/>
            <person name="Du H."/>
            <person name="Sun H."/>
            <person name="Bradshaw-Cordum H."/>
            <person name="Ali J."/>
            <person name="Carter J."/>
            <person name="Cordes M."/>
            <person name="Harris A."/>
            <person name="Isak A."/>
            <person name="van Brunt A."/>
            <person name="Nguyen C."/>
            <person name="Du F."/>
            <person name="Courtney L."/>
            <person name="Kalicki J."/>
            <person name="Ozersky P."/>
            <person name="Abbott S."/>
            <person name="Armstrong J."/>
            <person name="Belter E.A."/>
            <person name="Caruso L."/>
            <person name="Cedroni M."/>
            <person name="Cotton M."/>
            <person name="Davidson T."/>
            <person name="Desai A."/>
            <person name="Elliott G."/>
            <person name="Erb T."/>
            <person name="Fronick C."/>
            <person name="Gaige T."/>
            <person name="Haakenson W."/>
            <person name="Haglund K."/>
            <person name="Holmes A."/>
            <person name="Harkins R."/>
            <person name="Kim K."/>
            <person name="Kruchowski S.S."/>
            <person name="Strong C.M."/>
            <person name="Grewal N."/>
            <person name="Goyea E."/>
            <person name="Hou S."/>
            <person name="Levy A."/>
            <person name="Martinka S."/>
            <person name="Mead K."/>
            <person name="McLellan M.D."/>
            <person name="Meyer R."/>
            <person name="Randall-Maher J."/>
            <person name="Tomlinson C."/>
            <person name="Dauphin-Kohlberg S."/>
            <person name="Kozlowicz-Reilly A."/>
            <person name="Shah N."/>
            <person name="Swearengen-Shahid S."/>
            <person name="Snider J."/>
            <person name="Strong J.T."/>
            <person name="Thompson J."/>
            <person name="Yoakum M."/>
            <person name="Leonard S."/>
            <person name="Pearman C."/>
            <person name="Trani L."/>
            <person name="Radionenko M."/>
            <person name="Waligorski J.E."/>
            <person name="Wang C."/>
            <person name="Rock S.M."/>
            <person name="Tin-Wollam A.-M."/>
            <person name="Maupin R."/>
            <person name="Latreille P."/>
            <person name="Wendl M.C."/>
            <person name="Yang S.-P."/>
            <person name="Pohl C."/>
            <person name="Wallis J.W."/>
            <person name="Spieth J."/>
            <person name="Bieri T.A."/>
            <person name="Berkowicz N."/>
            <person name="Nelson J.O."/>
            <person name="Osborne J."/>
            <person name="Ding L."/>
            <person name="Meyer R."/>
            <person name="Sabo A."/>
            <person name="Shotland Y."/>
            <person name="Sinha P."/>
            <person name="Wohldmann P.E."/>
            <person name="Cook L.L."/>
            <person name="Hickenbotham M.T."/>
            <person name="Eldred J."/>
            <person name="Williams D."/>
            <person name="Jones T.A."/>
            <person name="She X."/>
            <person name="Ciccarelli F.D."/>
            <person name="Izaurralde E."/>
            <person name="Taylor J."/>
            <person name="Schmutz J."/>
            <person name="Myers R.M."/>
            <person name="Cox D.R."/>
            <person name="Huang X."/>
            <person name="McPherson J.D."/>
            <person name="Mardis E.R."/>
            <person name="Clifton S.W."/>
            <person name="Warren W.C."/>
            <person name="Chinwalla A.T."/>
            <person name="Eddy S.R."/>
            <person name="Marra M.A."/>
            <person name="Ovcharenko I."/>
            <person name="Furey T.S."/>
            <person name="Miller W."/>
            <person name="Eichler E.E."/>
            <person name="Bork P."/>
            <person name="Suyama M."/>
            <person name="Torrents D."/>
            <person name="Waterston R.H."/>
            <person name="Wilson R.K."/>
        </authorList>
    </citation>
    <scope>NUCLEOTIDE SEQUENCE [LARGE SCALE GENOMIC DNA]</scope>
</reference>
<reference key="4">
    <citation type="submission" date="2005-09" db="EMBL/GenBank/DDBJ databases">
        <authorList>
            <person name="Mural R.J."/>
            <person name="Istrail S."/>
            <person name="Sutton G.G."/>
            <person name="Florea L."/>
            <person name="Halpern A.L."/>
            <person name="Mobarry C.M."/>
            <person name="Lippert R."/>
            <person name="Walenz B."/>
            <person name="Shatkay H."/>
            <person name="Dew I."/>
            <person name="Miller J.R."/>
            <person name="Flanigan M.J."/>
            <person name="Edwards N.J."/>
            <person name="Bolanos R."/>
            <person name="Fasulo D."/>
            <person name="Halldorsson B.V."/>
            <person name="Hannenhalli S."/>
            <person name="Turner R."/>
            <person name="Yooseph S."/>
            <person name="Lu F."/>
            <person name="Nusskern D.R."/>
            <person name="Shue B.C."/>
            <person name="Zheng X.H."/>
            <person name="Zhong F."/>
            <person name="Delcher A.L."/>
            <person name="Huson D.H."/>
            <person name="Kravitz S.A."/>
            <person name="Mouchard L."/>
            <person name="Reinert K."/>
            <person name="Remington K.A."/>
            <person name="Clark A.G."/>
            <person name="Waterman M.S."/>
            <person name="Eichler E.E."/>
            <person name="Adams M.D."/>
            <person name="Hunkapiller M.W."/>
            <person name="Myers E.W."/>
            <person name="Venter J.C."/>
        </authorList>
    </citation>
    <scope>NUCLEOTIDE SEQUENCE [LARGE SCALE GENOMIC DNA]</scope>
</reference>
<reference key="5">
    <citation type="journal article" date="2004" name="Genome Res.">
        <title>The status, quality, and expansion of the NIH full-length cDNA project: the Mammalian Gene Collection (MGC).</title>
        <authorList>
            <consortium name="The MGC Project Team"/>
        </authorList>
    </citation>
    <scope>NUCLEOTIDE SEQUENCE [LARGE SCALE MRNA] OF 2-503 (ISOFORM 1)</scope>
    <source>
        <tissue>Muscle</tissue>
    </source>
</reference>
<reference key="6">
    <citation type="journal article" date="2021" name="Int. J. Mol. Sci.">
        <title>Human TRMT112-Methyltransferase Network Consists of Seven Partners Interacting with a Common Co-Factor.</title>
        <authorList>
            <person name="Brumele B."/>
            <person name="Mutso M."/>
            <person name="Telanne L."/>
            <person name="Ounap K."/>
            <person name="Spunde K."/>
            <person name="Abroi A."/>
            <person name="Kurg R."/>
        </authorList>
    </citation>
    <scope>IDENTIFICATION IN THE THUMPD2-TRM112 METHYLTRANSFERASE COMPLEX</scope>
    <scope>SUBCELLULAR LOCATION</scope>
</reference>
<reference key="7">
    <citation type="journal article" date="2023" name="Nucleic Acids Res.">
        <title>N 2-methylguanosine modifications on human tRNAs and snRNA U6 are important for cell proliferation, protein translation and pre-mRNA splicing.</title>
        <authorList>
            <person name="Wang C."/>
            <person name="Ulryck N."/>
            <person name="Herzel L."/>
            <person name="Pythoud N."/>
            <person name="Kleiber N."/>
            <person name="Guerineau V."/>
            <person name="Jactel V."/>
            <person name="Moritz C."/>
            <person name="Bohnsack M.T."/>
            <person name="Carapito C."/>
            <person name="Touboul D."/>
            <person name="Bohnsack K.E."/>
            <person name="Graille M."/>
        </authorList>
    </citation>
    <scope>FUNCTION</scope>
    <scope>CATALYTIC ACTIVITY</scope>
    <scope>IDENTIFICATION IN THE THUMPD2-TRM112 METHYLTRANSFERASE COMPLEX</scope>
</reference>
<proteinExistence type="evidence at protein level"/>
<keyword id="KW-0025">Alternative splicing</keyword>
<keyword id="KW-0489">Methyltransferase</keyword>
<keyword id="KW-0539">Nucleus</keyword>
<keyword id="KW-1267">Proteomics identification</keyword>
<keyword id="KW-1185">Reference proteome</keyword>
<keyword id="KW-0694">RNA-binding</keyword>
<keyword id="KW-0808">Transferase</keyword>
<sequence length="503" mass="56433">MSEARGEPGSGPEAGARFFCTAGRGLEPFVMREVRARLAATQVEYISGKVFFTTCSDLNMLKKLKSAERLFLLIKKQFPLIISSVSKGKIFNEMQRLINEDPGSWLNAISIWKNLLELDAKKEKLSQRDDNQLKRKVGENEIIAKKLKIEQMQKIEENRDCQLEKQIKEETLEQRDFTTKSEKFQEEEFQNDIEKAIDTHNQNDLTFRVSCRCSGTIGKAFTAQEVGKVIGIAIMKHFGWKADLRNPQLEIFIHLNDIYSVVGIPVFRVSLASRAYIKTAGLRSTIAWAMASLADIKAGAFVLDPMCGLGTILLEAAKEWPDVYYVGADVSDSQLLGTWDNLKAAGLEDKIELLKISVIELPLPSESVDIIISDIPFGKKFKLGKDIKSILQEMERVLHVGGTIVLLLSEDHHRRLTDCKESNIPFNSKDSHTDEPGIKKCLNPEEKTGAFKTASTSFEASNHKFLDRMSPFGSLVPVECYKVSLGKTDAFICKYKKSHSSGL</sequence>
<evidence type="ECO:0000255" key="1">
    <source>
        <dbReference type="PROSITE-ProRule" id="PRU00529"/>
    </source>
</evidence>
<evidence type="ECO:0000269" key="2">
    <source>
    </source>
</evidence>
<evidence type="ECO:0000269" key="3">
    <source>
    </source>
</evidence>
<evidence type="ECO:0000269" key="4">
    <source>
    </source>
</evidence>
<evidence type="ECO:0000303" key="5">
    <source>
    </source>
</evidence>
<evidence type="ECO:0000305" key="6"/>
<evidence type="ECO:0000305" key="7">
    <source>
    </source>
</evidence>
<evidence type="ECO:0000312" key="8">
    <source>
        <dbReference type="HGNC" id="HGNC:14890"/>
    </source>
</evidence>
<comment type="function">
    <text evidence="4">Catalytic subunit of the THUMPD2-TRM112 methyltransferase complex, that specifically mediates the S-adenosyl-L-methionine-dependent N(2)-methylation of guanosine nucleotides, most probably at position 72 (m2G72), in the U6snRNA of the major spliceosome (PubMed:37283053). This modification in the U6 snRNA affects the constitutive splicing efficiency of introns that have suboptimal splice sites and can impact final mRNA levels (PubMed:37283053).</text>
</comment>
<comment type="catalytic activity">
    <reaction evidence="4">
        <text>guanosine in U6 snRNA + S-adenosyl-L-methionine = N(2)-methylguanosine in U6 snRNA + S-adenosyl-L-homocysteine + H(+)</text>
        <dbReference type="Rhea" id="RHEA:83423"/>
        <dbReference type="Rhea" id="RHEA-COMP:20128"/>
        <dbReference type="Rhea" id="RHEA-COMP:20129"/>
        <dbReference type="ChEBI" id="CHEBI:15378"/>
        <dbReference type="ChEBI" id="CHEBI:57856"/>
        <dbReference type="ChEBI" id="CHEBI:59789"/>
        <dbReference type="ChEBI" id="CHEBI:74269"/>
        <dbReference type="ChEBI" id="CHEBI:74481"/>
    </reaction>
    <physiologicalReaction direction="left-to-right" evidence="7">
        <dbReference type="Rhea" id="RHEA:83424"/>
    </physiologicalReaction>
</comment>
<comment type="subunit">
    <text evidence="3 4">Part of the heterodimeric THUMPD2-TRM112 methyltransferase complex; this complex forms an active tRNA methyltransferase, where TRMT112 acts as an activator of the catalytic subunit THUMPD2.</text>
</comment>
<comment type="interaction">
    <interactant intactId="EBI-15105991">
        <id>Q9BTF0</id>
    </interactant>
    <interactant intactId="EBI-373326">
        <id>Q9UI30</id>
        <label>TRMT112</label>
    </interactant>
    <organismsDiffer>false</organismsDiffer>
    <experiments>5</experiments>
</comment>
<comment type="interaction">
    <interactant intactId="EBI-15105991">
        <id>Q9BTF0</id>
    </interactant>
    <interactant intactId="EBI-720609">
        <id>O76024</id>
        <label>WFS1</label>
    </interactant>
    <organismsDiffer>false</organismsDiffer>
    <experiments>3</experiments>
</comment>
<comment type="subcellular location">
    <subcellularLocation>
        <location evidence="3">Nucleus</location>
    </subcellularLocation>
</comment>
<comment type="alternative products">
    <event type="alternative splicing"/>
    <isoform>
        <id>Q9BTF0-1</id>
        <name>1</name>
        <sequence type="displayed"/>
    </isoform>
    <isoform>
        <id>Q9BTF0-2</id>
        <name>2</name>
        <sequence type="described" ref="VSP_041645 VSP_041646"/>
    </isoform>
</comment>
<comment type="tissue specificity">
    <text evidence="2">Expressed in a variety of tissues including brain, colon, gingiva, heart, kidney, liver, lung, placenta, small intestine, spleen and thymus.</text>
</comment>
<comment type="similarity">
    <text evidence="6">Belongs to the methyltransferase superfamily.</text>
</comment>
<comment type="sequence caution" evidence="6">
    <conflict type="erroneous initiation">
        <sequence resource="EMBL-CDS" id="AAH04163"/>
    </conflict>
    <text>Truncated N-terminus.</text>
</comment>
<comment type="sequence caution" evidence="6">
    <conflict type="erroneous initiation">
        <sequence resource="EMBL-CDS" id="AAH13299"/>
    </conflict>
    <text>Truncated N-terminus.</text>
</comment>
<comment type="sequence caution" evidence="6">
    <conflict type="erroneous initiation">
        <sequence resource="EMBL-CDS" id="AAL26317"/>
    </conflict>
    <text>Truncated N-terminus.</text>
</comment>
<comment type="sequence caution" evidence="6">
    <conflict type="erroneous initiation">
        <sequence resource="EMBL-CDS" id="AAY14769"/>
    </conflict>
    <text>Truncated N-terminus.</text>
</comment>
<gene>
    <name evidence="8" type="primary">THUMPD2</name>
    <name evidence="8" type="synonym">C2orf8</name>
</gene>
<protein>
    <recommendedName>
        <fullName evidence="7">U6 snRNA (guanine-N(2))-methyltransferase THUMPD2</fullName>
        <ecNumber evidence="4">2.1.1.-</ecNumber>
    </recommendedName>
    <alternativeName>
        <fullName evidence="8">THUMP domain-containing protein 2</fullName>
    </alternativeName>
</protein>
<organism>
    <name type="scientific">Homo sapiens</name>
    <name type="common">Human</name>
    <dbReference type="NCBI Taxonomy" id="9606"/>
    <lineage>
        <taxon>Eukaryota</taxon>
        <taxon>Metazoa</taxon>
        <taxon>Chordata</taxon>
        <taxon>Craniata</taxon>
        <taxon>Vertebrata</taxon>
        <taxon>Euteleostomi</taxon>
        <taxon>Mammalia</taxon>
        <taxon>Eutheria</taxon>
        <taxon>Euarchontoglires</taxon>
        <taxon>Primates</taxon>
        <taxon>Haplorrhini</taxon>
        <taxon>Catarrhini</taxon>
        <taxon>Hominidae</taxon>
        <taxon>Homo</taxon>
    </lineage>
</organism>
<feature type="chain" id="PRO_0000072532" description="U6 snRNA (guanine-N(2))-methyltransferase THUMPD2">
    <location>
        <begin position="1"/>
        <end position="503"/>
    </location>
</feature>
<feature type="domain" description="THUMP" evidence="1">
    <location>
        <begin position="161"/>
        <end position="266"/>
    </location>
</feature>
<feature type="splice variant" id="VSP_041645" description="In isoform 2." evidence="5">
    <original>AGAFVL</original>
    <variation>VPYGSD</variation>
    <location>
        <begin position="298"/>
        <end position="303"/>
    </location>
</feature>
<feature type="splice variant" id="VSP_041646" description="In isoform 2." evidence="5">
    <location>
        <begin position="304"/>
        <end position="503"/>
    </location>
</feature>
<dbReference type="EC" id="2.1.1.-" evidence="4"/>
<dbReference type="EMBL" id="AF380576">
    <property type="protein sequence ID" value="AAL26317.1"/>
    <property type="status" value="ALT_INIT"/>
    <property type="molecule type" value="Genomic_DNA"/>
</dbReference>
<dbReference type="EMBL" id="AF380566">
    <property type="protein sequence ID" value="AAL26317.1"/>
    <property type="status" value="JOINED"/>
    <property type="molecule type" value="Genomic_DNA"/>
</dbReference>
<dbReference type="EMBL" id="AF380567">
    <property type="protein sequence ID" value="AAL26317.1"/>
    <property type="status" value="JOINED"/>
    <property type="molecule type" value="Genomic_DNA"/>
</dbReference>
<dbReference type="EMBL" id="AF380568">
    <property type="protein sequence ID" value="AAL26317.1"/>
    <property type="status" value="JOINED"/>
    <property type="molecule type" value="Genomic_DNA"/>
</dbReference>
<dbReference type="EMBL" id="AF380569">
    <property type="protein sequence ID" value="AAL26317.1"/>
    <property type="status" value="JOINED"/>
    <property type="molecule type" value="Genomic_DNA"/>
</dbReference>
<dbReference type="EMBL" id="AF380570">
    <property type="protein sequence ID" value="AAL26317.1"/>
    <property type="status" value="JOINED"/>
    <property type="molecule type" value="Genomic_DNA"/>
</dbReference>
<dbReference type="EMBL" id="AF380571">
    <property type="protein sequence ID" value="AAL26317.1"/>
    <property type="status" value="JOINED"/>
    <property type="molecule type" value="Genomic_DNA"/>
</dbReference>
<dbReference type="EMBL" id="AF380573">
    <property type="protein sequence ID" value="AAL26317.1"/>
    <property type="status" value="JOINED"/>
    <property type="molecule type" value="Genomic_DNA"/>
</dbReference>
<dbReference type="EMBL" id="AF380574">
    <property type="protein sequence ID" value="AAL26317.1"/>
    <property type="status" value="JOINED"/>
    <property type="molecule type" value="Genomic_DNA"/>
</dbReference>
<dbReference type="EMBL" id="AF380575">
    <property type="protein sequence ID" value="AAL26317.1"/>
    <property type="status" value="JOINED"/>
    <property type="molecule type" value="Genomic_DNA"/>
</dbReference>
<dbReference type="EMBL" id="AK292002">
    <property type="protein sequence ID" value="BAF84691.1"/>
    <property type="molecule type" value="mRNA"/>
</dbReference>
<dbReference type="EMBL" id="AK093580">
    <property type="protein sequence ID" value="BAG52741.1"/>
    <property type="molecule type" value="mRNA"/>
</dbReference>
<dbReference type="EMBL" id="AC007246">
    <property type="protein sequence ID" value="AAX93065.1"/>
    <property type="molecule type" value="Genomic_DNA"/>
</dbReference>
<dbReference type="EMBL" id="AC007253">
    <property type="protein sequence ID" value="AAY14769.1"/>
    <property type="status" value="ALT_INIT"/>
    <property type="molecule type" value="Genomic_DNA"/>
</dbReference>
<dbReference type="EMBL" id="CH471053">
    <property type="protein sequence ID" value="EAX00339.1"/>
    <property type="molecule type" value="Genomic_DNA"/>
</dbReference>
<dbReference type="EMBL" id="CH471053">
    <property type="protein sequence ID" value="EAX00340.1"/>
    <property type="molecule type" value="Genomic_DNA"/>
</dbReference>
<dbReference type="EMBL" id="BC004163">
    <property type="protein sequence ID" value="AAH04163.1"/>
    <property type="status" value="ALT_INIT"/>
    <property type="molecule type" value="mRNA"/>
</dbReference>
<dbReference type="EMBL" id="BC013299">
    <property type="protein sequence ID" value="AAH13299.1"/>
    <property type="status" value="ALT_INIT"/>
    <property type="molecule type" value="mRNA"/>
</dbReference>
<dbReference type="CCDS" id="CCDS1805.2">
    <molecule id="Q9BTF0-1"/>
</dbReference>
<dbReference type="RefSeq" id="NP_079540.2">
    <molecule id="Q9BTF0-1"/>
    <property type="nucleotide sequence ID" value="NM_025264.5"/>
</dbReference>
<dbReference type="SMR" id="Q9BTF0"/>
<dbReference type="BioGRID" id="123287">
    <property type="interactions" value="19"/>
</dbReference>
<dbReference type="ComplexPortal" id="CPX-2852">
    <property type="entry name" value="THUMPD2-TRM112 methyltransferase complex"/>
</dbReference>
<dbReference type="FunCoup" id="Q9BTF0">
    <property type="interactions" value="742"/>
</dbReference>
<dbReference type="IntAct" id="Q9BTF0">
    <property type="interactions" value="9"/>
</dbReference>
<dbReference type="STRING" id="9606.ENSP00000423933"/>
<dbReference type="iPTMnet" id="Q9BTF0"/>
<dbReference type="PhosphoSitePlus" id="Q9BTF0"/>
<dbReference type="BioMuta" id="THUMPD2"/>
<dbReference type="DMDM" id="342187042"/>
<dbReference type="jPOST" id="Q9BTF0"/>
<dbReference type="MassIVE" id="Q9BTF0"/>
<dbReference type="PaxDb" id="9606-ENSP00000423933"/>
<dbReference type="PeptideAtlas" id="Q9BTF0"/>
<dbReference type="ProteomicsDB" id="78990">
    <molecule id="Q9BTF0-1"/>
</dbReference>
<dbReference type="ProteomicsDB" id="78991">
    <molecule id="Q9BTF0-2"/>
</dbReference>
<dbReference type="Pumba" id="Q9BTF0"/>
<dbReference type="Antibodypedia" id="29662">
    <property type="antibodies" value="51 antibodies from 17 providers"/>
</dbReference>
<dbReference type="DNASU" id="80745"/>
<dbReference type="Ensembl" id="ENST00000378727.8">
    <molecule id="Q9BTF0-2"/>
    <property type="protein sequence ID" value="ENSP00000368001.4"/>
    <property type="gene ID" value="ENSG00000138050.15"/>
</dbReference>
<dbReference type="Ensembl" id="ENST00000505747.6">
    <molecule id="Q9BTF0-1"/>
    <property type="protein sequence ID" value="ENSP00000423933.1"/>
    <property type="gene ID" value="ENSG00000138050.15"/>
</dbReference>
<dbReference type="GeneID" id="80745"/>
<dbReference type="KEGG" id="hsa:80745"/>
<dbReference type="MANE-Select" id="ENST00000505747.6">
    <property type="protein sequence ID" value="ENSP00000423933.1"/>
    <property type="RefSeq nucleotide sequence ID" value="NM_025264.5"/>
    <property type="RefSeq protein sequence ID" value="NP_079540.2"/>
</dbReference>
<dbReference type="UCSC" id="uc002rru.3">
    <molecule id="Q9BTF0-1"/>
    <property type="organism name" value="human"/>
</dbReference>
<dbReference type="AGR" id="HGNC:14890"/>
<dbReference type="CTD" id="80745"/>
<dbReference type="DisGeNET" id="80745"/>
<dbReference type="GeneCards" id="THUMPD2"/>
<dbReference type="HGNC" id="HGNC:14890">
    <property type="gene designation" value="THUMPD2"/>
</dbReference>
<dbReference type="HPA" id="ENSG00000138050">
    <property type="expression patterns" value="Low tissue specificity"/>
</dbReference>
<dbReference type="MIM" id="611751">
    <property type="type" value="gene"/>
</dbReference>
<dbReference type="neXtProt" id="NX_Q9BTF0"/>
<dbReference type="OpenTargets" id="ENSG00000138050"/>
<dbReference type="PharmGKB" id="PA134976355"/>
<dbReference type="VEuPathDB" id="HostDB:ENSG00000138050"/>
<dbReference type="eggNOG" id="ENOG502QSR4">
    <property type="taxonomic scope" value="Eukaryota"/>
</dbReference>
<dbReference type="GeneTree" id="ENSGT00530000063557"/>
<dbReference type="HOGENOM" id="CLU_045692_1_0_1"/>
<dbReference type="InParanoid" id="Q9BTF0"/>
<dbReference type="OMA" id="QWTSAVM"/>
<dbReference type="OrthoDB" id="2013972at2759"/>
<dbReference type="PAN-GO" id="Q9BTF0">
    <property type="GO annotations" value="2 GO annotations based on evolutionary models"/>
</dbReference>
<dbReference type="PhylomeDB" id="Q9BTF0"/>
<dbReference type="TreeFam" id="TF313093"/>
<dbReference type="PathwayCommons" id="Q9BTF0"/>
<dbReference type="SignaLink" id="Q9BTF0"/>
<dbReference type="BioGRID-ORCS" id="80745">
    <property type="hits" value="18 hits in 1154 CRISPR screens"/>
</dbReference>
<dbReference type="ChiTaRS" id="THUMPD2">
    <property type="organism name" value="human"/>
</dbReference>
<dbReference type="GenomeRNAi" id="80745"/>
<dbReference type="Pharos" id="Q9BTF0">
    <property type="development level" value="Tdark"/>
</dbReference>
<dbReference type="PRO" id="PR:Q9BTF0"/>
<dbReference type="Proteomes" id="UP000005640">
    <property type="component" value="Chromosome 2"/>
</dbReference>
<dbReference type="RNAct" id="Q9BTF0">
    <property type="molecule type" value="protein"/>
</dbReference>
<dbReference type="Bgee" id="ENSG00000138050">
    <property type="expression patterns" value="Expressed in ascending aorta and 157 other cell types or tissues"/>
</dbReference>
<dbReference type="ExpressionAtlas" id="Q9BTF0">
    <property type="expression patterns" value="baseline and differential"/>
</dbReference>
<dbReference type="GO" id="GO:0005634">
    <property type="term" value="C:nucleus"/>
    <property type="evidence" value="ECO:0000314"/>
    <property type="project" value="UniProtKB"/>
</dbReference>
<dbReference type="GO" id="GO:0043527">
    <property type="term" value="C:tRNA methyltransferase complex"/>
    <property type="evidence" value="ECO:0000314"/>
    <property type="project" value="UniProtKB"/>
</dbReference>
<dbReference type="GO" id="GO:0003723">
    <property type="term" value="F:RNA binding"/>
    <property type="evidence" value="ECO:0007669"/>
    <property type="project" value="UniProtKB-KW"/>
</dbReference>
<dbReference type="GO" id="GO:0016423">
    <property type="term" value="F:tRNA (guanine) methyltransferase activity"/>
    <property type="evidence" value="ECO:0000318"/>
    <property type="project" value="GO_Central"/>
</dbReference>
<dbReference type="GO" id="GO:0160230">
    <property type="term" value="F:U6 snRNA (guanine-N(2))-methyltransferase activity"/>
    <property type="evidence" value="ECO:0000314"/>
    <property type="project" value="UniProtKB"/>
</dbReference>
<dbReference type="GO" id="GO:0000381">
    <property type="term" value="P:regulation of alternative mRNA splicing, via spliceosome"/>
    <property type="evidence" value="ECO:0000315"/>
    <property type="project" value="UniProtKB"/>
</dbReference>
<dbReference type="GO" id="GO:0030488">
    <property type="term" value="P:tRNA methylation"/>
    <property type="evidence" value="ECO:0000318"/>
    <property type="project" value="GO_Central"/>
</dbReference>
<dbReference type="CDD" id="cd02440">
    <property type="entry name" value="AdoMet_MTases"/>
    <property type="match status" value="1"/>
</dbReference>
<dbReference type="CDD" id="cd11715">
    <property type="entry name" value="THUMP_AdoMetMT"/>
    <property type="match status" value="1"/>
</dbReference>
<dbReference type="FunFam" id="3.30.2130.30:FF:000005">
    <property type="entry name" value="THUMP domain containing 2, isoform CRA_b"/>
    <property type="match status" value="1"/>
</dbReference>
<dbReference type="FunFam" id="3.40.50.150:FF:000177">
    <property type="entry name" value="THUMP domain containing 2, isoform CRA_b"/>
    <property type="match status" value="1"/>
</dbReference>
<dbReference type="Gene3D" id="3.30.2130.30">
    <property type="match status" value="1"/>
</dbReference>
<dbReference type="Gene3D" id="3.40.50.150">
    <property type="entry name" value="Vaccinia Virus protein VP39"/>
    <property type="match status" value="1"/>
</dbReference>
<dbReference type="InterPro" id="IPR000241">
    <property type="entry name" value="RlmKL-like_Mtase"/>
</dbReference>
<dbReference type="InterPro" id="IPR029063">
    <property type="entry name" value="SAM-dependent_MTases_sf"/>
</dbReference>
<dbReference type="InterPro" id="IPR004114">
    <property type="entry name" value="THUMP_dom"/>
</dbReference>
<dbReference type="PANTHER" id="PTHR14911">
    <property type="entry name" value="THUMP DOMAIN-CONTAINING"/>
    <property type="match status" value="1"/>
</dbReference>
<dbReference type="PANTHER" id="PTHR14911:SF1">
    <property type="entry name" value="THUMP DOMAIN-CONTAINING PROTEIN 2"/>
    <property type="match status" value="1"/>
</dbReference>
<dbReference type="Pfam" id="PF02926">
    <property type="entry name" value="THUMP"/>
    <property type="match status" value="1"/>
</dbReference>
<dbReference type="Pfam" id="PF01170">
    <property type="entry name" value="UPF0020"/>
    <property type="match status" value="1"/>
</dbReference>
<dbReference type="SMART" id="SM00981">
    <property type="entry name" value="THUMP"/>
    <property type="match status" value="1"/>
</dbReference>
<dbReference type="SUPFAM" id="SSF53335">
    <property type="entry name" value="S-adenosyl-L-methionine-dependent methyltransferases"/>
    <property type="match status" value="1"/>
</dbReference>
<dbReference type="SUPFAM" id="SSF143437">
    <property type="entry name" value="THUMP domain-like"/>
    <property type="match status" value="1"/>
</dbReference>
<dbReference type="PROSITE" id="PS51165">
    <property type="entry name" value="THUMP"/>
    <property type="match status" value="1"/>
</dbReference>
<accession>Q9BTF0</accession>
<accession>A8K7I7</accession>
<accession>Q53TT8</accession>
<accession>Q53TV0</accession>
<name>THUM2_HUMAN</name>